<evidence type="ECO:0000255" key="1">
    <source>
        <dbReference type="HAMAP-Rule" id="MF_00075"/>
    </source>
</evidence>
<gene>
    <name evidence="1" type="primary">infA</name>
    <name type="ordered locus">COXBURSA331_A1346</name>
</gene>
<accession>A9NDR7</accession>
<proteinExistence type="inferred from homology"/>
<protein>
    <recommendedName>
        <fullName evidence="1">Translation initiation factor IF-1</fullName>
    </recommendedName>
</protein>
<comment type="function">
    <text evidence="1">One of the essential components for the initiation of protein synthesis. Stabilizes the binding of IF-2 and IF-3 on the 30S subunit to which N-formylmethionyl-tRNA(fMet) subsequently binds. Helps modulate mRNA selection, yielding the 30S pre-initiation complex (PIC). Upon addition of the 50S ribosomal subunit IF-1, IF-2 and IF-3 are released leaving the mature 70S translation initiation complex.</text>
</comment>
<comment type="subunit">
    <text evidence="1">Component of the 30S ribosomal translation pre-initiation complex which assembles on the 30S ribosome in the order IF-2 and IF-3, IF-1 and N-formylmethionyl-tRNA(fMet); mRNA recruitment can occur at any time during PIC assembly.</text>
</comment>
<comment type="subcellular location">
    <subcellularLocation>
        <location evidence="1">Cytoplasm</location>
    </subcellularLocation>
</comment>
<comment type="similarity">
    <text evidence="1">Belongs to the IF-1 family.</text>
</comment>
<reference key="1">
    <citation type="submission" date="2007-11" db="EMBL/GenBank/DDBJ databases">
        <title>Genome sequencing of phylogenetically and phenotypically diverse Coxiella burnetii isolates.</title>
        <authorList>
            <person name="Seshadri R."/>
            <person name="Samuel J.E."/>
        </authorList>
    </citation>
    <scope>NUCLEOTIDE SEQUENCE [LARGE SCALE GENOMIC DNA]</scope>
    <source>
        <strain>RSA 331 / Henzerling II</strain>
    </source>
</reference>
<dbReference type="EMBL" id="CP000890">
    <property type="protein sequence ID" value="ABX78357.1"/>
    <property type="molecule type" value="Genomic_DNA"/>
</dbReference>
<dbReference type="RefSeq" id="WP_005770719.1">
    <property type="nucleotide sequence ID" value="NC_010117.1"/>
</dbReference>
<dbReference type="SMR" id="A9NDR7"/>
<dbReference type="KEGG" id="cbs:COXBURSA331_A1346"/>
<dbReference type="HOGENOM" id="CLU_151267_1_0_6"/>
<dbReference type="GO" id="GO:0005829">
    <property type="term" value="C:cytosol"/>
    <property type="evidence" value="ECO:0007669"/>
    <property type="project" value="TreeGrafter"/>
</dbReference>
<dbReference type="GO" id="GO:0043022">
    <property type="term" value="F:ribosome binding"/>
    <property type="evidence" value="ECO:0007669"/>
    <property type="project" value="UniProtKB-UniRule"/>
</dbReference>
<dbReference type="GO" id="GO:0019843">
    <property type="term" value="F:rRNA binding"/>
    <property type="evidence" value="ECO:0007669"/>
    <property type="project" value="UniProtKB-UniRule"/>
</dbReference>
<dbReference type="GO" id="GO:0003743">
    <property type="term" value="F:translation initiation factor activity"/>
    <property type="evidence" value="ECO:0007669"/>
    <property type="project" value="UniProtKB-UniRule"/>
</dbReference>
<dbReference type="CDD" id="cd04451">
    <property type="entry name" value="S1_IF1"/>
    <property type="match status" value="1"/>
</dbReference>
<dbReference type="FunFam" id="2.40.50.140:FF:000002">
    <property type="entry name" value="Translation initiation factor IF-1"/>
    <property type="match status" value="1"/>
</dbReference>
<dbReference type="Gene3D" id="2.40.50.140">
    <property type="entry name" value="Nucleic acid-binding proteins"/>
    <property type="match status" value="1"/>
</dbReference>
<dbReference type="HAMAP" id="MF_00075">
    <property type="entry name" value="IF_1"/>
    <property type="match status" value="1"/>
</dbReference>
<dbReference type="InterPro" id="IPR012340">
    <property type="entry name" value="NA-bd_OB-fold"/>
</dbReference>
<dbReference type="InterPro" id="IPR006196">
    <property type="entry name" value="RNA-binding_domain_S1_IF1"/>
</dbReference>
<dbReference type="InterPro" id="IPR003029">
    <property type="entry name" value="S1_domain"/>
</dbReference>
<dbReference type="InterPro" id="IPR004368">
    <property type="entry name" value="TIF_IF1"/>
</dbReference>
<dbReference type="NCBIfam" id="TIGR00008">
    <property type="entry name" value="infA"/>
    <property type="match status" value="1"/>
</dbReference>
<dbReference type="PANTHER" id="PTHR33370">
    <property type="entry name" value="TRANSLATION INITIATION FACTOR IF-1, CHLOROPLASTIC"/>
    <property type="match status" value="1"/>
</dbReference>
<dbReference type="PANTHER" id="PTHR33370:SF1">
    <property type="entry name" value="TRANSLATION INITIATION FACTOR IF-1, CHLOROPLASTIC"/>
    <property type="match status" value="1"/>
</dbReference>
<dbReference type="Pfam" id="PF01176">
    <property type="entry name" value="eIF-1a"/>
    <property type="match status" value="1"/>
</dbReference>
<dbReference type="SMART" id="SM00316">
    <property type="entry name" value="S1"/>
    <property type="match status" value="1"/>
</dbReference>
<dbReference type="SUPFAM" id="SSF50249">
    <property type="entry name" value="Nucleic acid-binding proteins"/>
    <property type="match status" value="1"/>
</dbReference>
<dbReference type="PROSITE" id="PS50832">
    <property type="entry name" value="S1_IF1_TYPE"/>
    <property type="match status" value="1"/>
</dbReference>
<sequence length="83" mass="9326">MAKEESIEMQGTVVDSLPNTTFRVKLENGHVVTAHISGRMRKHYIRILTGDAVTVELTPYDLTRGRIVYREAGKKPPTSKAEE</sequence>
<name>IF1_COXBR</name>
<keyword id="KW-0963">Cytoplasm</keyword>
<keyword id="KW-0396">Initiation factor</keyword>
<keyword id="KW-0648">Protein biosynthesis</keyword>
<keyword id="KW-0694">RNA-binding</keyword>
<keyword id="KW-0699">rRNA-binding</keyword>
<feature type="chain" id="PRO_0000338812" description="Translation initiation factor IF-1">
    <location>
        <begin position="1"/>
        <end position="83"/>
    </location>
</feature>
<feature type="domain" description="S1-like" evidence="1">
    <location>
        <begin position="1"/>
        <end position="72"/>
    </location>
</feature>
<organism>
    <name type="scientific">Coxiella burnetii (strain RSA 331 / Henzerling II)</name>
    <dbReference type="NCBI Taxonomy" id="360115"/>
    <lineage>
        <taxon>Bacteria</taxon>
        <taxon>Pseudomonadati</taxon>
        <taxon>Pseudomonadota</taxon>
        <taxon>Gammaproteobacteria</taxon>
        <taxon>Legionellales</taxon>
        <taxon>Coxiellaceae</taxon>
        <taxon>Coxiella</taxon>
    </lineage>
</organism>